<name>RS19_SYNJB</name>
<evidence type="ECO:0000255" key="1">
    <source>
        <dbReference type="HAMAP-Rule" id="MF_00531"/>
    </source>
</evidence>
<evidence type="ECO:0000305" key="2"/>
<organism>
    <name type="scientific">Synechococcus sp. (strain JA-2-3B'a(2-13))</name>
    <name type="common">Cyanobacteria bacterium Yellowstone B-Prime</name>
    <dbReference type="NCBI Taxonomy" id="321332"/>
    <lineage>
        <taxon>Bacteria</taxon>
        <taxon>Bacillati</taxon>
        <taxon>Cyanobacteriota</taxon>
        <taxon>Cyanophyceae</taxon>
        <taxon>Synechococcales</taxon>
        <taxon>Synechococcaceae</taxon>
        <taxon>Synechococcus</taxon>
    </lineage>
</organism>
<protein>
    <recommendedName>
        <fullName evidence="1">Small ribosomal subunit protein uS19</fullName>
    </recommendedName>
    <alternativeName>
        <fullName evidence="2">30S ribosomal protein S19</fullName>
    </alternativeName>
</protein>
<proteinExistence type="inferred from homology"/>
<gene>
    <name evidence="1" type="primary">rpsS</name>
    <name evidence="1" type="synonym">rps19</name>
    <name type="ordered locus">CYB_2601</name>
</gene>
<reference key="1">
    <citation type="journal article" date="2007" name="ISME J.">
        <title>Population level functional diversity in a microbial community revealed by comparative genomic and metagenomic analyses.</title>
        <authorList>
            <person name="Bhaya D."/>
            <person name="Grossman A.R."/>
            <person name="Steunou A.-S."/>
            <person name="Khuri N."/>
            <person name="Cohan F.M."/>
            <person name="Hamamura N."/>
            <person name="Melendrez M.C."/>
            <person name="Bateson M.M."/>
            <person name="Ward D.M."/>
            <person name="Heidelberg J.F."/>
        </authorList>
    </citation>
    <scope>NUCLEOTIDE SEQUENCE [LARGE SCALE GENOMIC DNA]</scope>
    <source>
        <strain>JA-2-3B'a(2-13)</strain>
    </source>
</reference>
<comment type="function">
    <text evidence="1">Protein S19 forms a complex with S13 that binds strongly to the 16S ribosomal RNA.</text>
</comment>
<comment type="similarity">
    <text evidence="1">Belongs to the universal ribosomal protein uS19 family.</text>
</comment>
<keyword id="KW-1185">Reference proteome</keyword>
<keyword id="KW-0687">Ribonucleoprotein</keyword>
<keyword id="KW-0689">Ribosomal protein</keyword>
<keyword id="KW-0694">RNA-binding</keyword>
<keyword id="KW-0699">rRNA-binding</keyword>
<feature type="chain" id="PRO_0000265452" description="Small ribosomal subunit protein uS19">
    <location>
        <begin position="1"/>
        <end position="93"/>
    </location>
</feature>
<sequence length="93" mass="10511">MGRSLKKGPFVDAKLLLKVEKMNERNEKHLIKTWSRASTILPVMIGHTIAVHNGKQHVPIYITDQMVGHKLGEFVPTRTFRGHAGSDKKAARR</sequence>
<accession>Q2JIM3</accession>
<dbReference type="EMBL" id="CP000240">
    <property type="protein sequence ID" value="ABD03531.1"/>
    <property type="molecule type" value="Genomic_DNA"/>
</dbReference>
<dbReference type="RefSeq" id="WP_011434156.1">
    <property type="nucleotide sequence ID" value="NC_007776.1"/>
</dbReference>
<dbReference type="SMR" id="Q2JIM3"/>
<dbReference type="STRING" id="321332.CYB_2601"/>
<dbReference type="KEGG" id="cyb:CYB_2601"/>
<dbReference type="eggNOG" id="COG0185">
    <property type="taxonomic scope" value="Bacteria"/>
</dbReference>
<dbReference type="HOGENOM" id="CLU_144911_0_1_3"/>
<dbReference type="OrthoDB" id="9797833at2"/>
<dbReference type="Proteomes" id="UP000001938">
    <property type="component" value="Chromosome"/>
</dbReference>
<dbReference type="GO" id="GO:0005737">
    <property type="term" value="C:cytoplasm"/>
    <property type="evidence" value="ECO:0007669"/>
    <property type="project" value="UniProtKB-ARBA"/>
</dbReference>
<dbReference type="GO" id="GO:0015935">
    <property type="term" value="C:small ribosomal subunit"/>
    <property type="evidence" value="ECO:0007669"/>
    <property type="project" value="InterPro"/>
</dbReference>
<dbReference type="GO" id="GO:0019843">
    <property type="term" value="F:rRNA binding"/>
    <property type="evidence" value="ECO:0007669"/>
    <property type="project" value="UniProtKB-UniRule"/>
</dbReference>
<dbReference type="GO" id="GO:0003735">
    <property type="term" value="F:structural constituent of ribosome"/>
    <property type="evidence" value="ECO:0007669"/>
    <property type="project" value="InterPro"/>
</dbReference>
<dbReference type="GO" id="GO:0000028">
    <property type="term" value="P:ribosomal small subunit assembly"/>
    <property type="evidence" value="ECO:0007669"/>
    <property type="project" value="TreeGrafter"/>
</dbReference>
<dbReference type="GO" id="GO:0006412">
    <property type="term" value="P:translation"/>
    <property type="evidence" value="ECO:0007669"/>
    <property type="project" value="UniProtKB-UniRule"/>
</dbReference>
<dbReference type="FunFam" id="3.30.860.10:FF:000001">
    <property type="entry name" value="30S ribosomal protein S19"/>
    <property type="match status" value="1"/>
</dbReference>
<dbReference type="Gene3D" id="3.30.860.10">
    <property type="entry name" value="30s Ribosomal Protein S19, Chain A"/>
    <property type="match status" value="1"/>
</dbReference>
<dbReference type="HAMAP" id="MF_00531">
    <property type="entry name" value="Ribosomal_uS19"/>
    <property type="match status" value="1"/>
</dbReference>
<dbReference type="InterPro" id="IPR002222">
    <property type="entry name" value="Ribosomal_uS19"/>
</dbReference>
<dbReference type="InterPro" id="IPR005732">
    <property type="entry name" value="Ribosomal_uS19_bac-type"/>
</dbReference>
<dbReference type="InterPro" id="IPR020934">
    <property type="entry name" value="Ribosomal_uS19_CS"/>
</dbReference>
<dbReference type="InterPro" id="IPR023575">
    <property type="entry name" value="Ribosomal_uS19_SF"/>
</dbReference>
<dbReference type="NCBIfam" id="TIGR01050">
    <property type="entry name" value="rpsS_bact"/>
    <property type="match status" value="1"/>
</dbReference>
<dbReference type="PANTHER" id="PTHR11880">
    <property type="entry name" value="RIBOSOMAL PROTEIN S19P FAMILY MEMBER"/>
    <property type="match status" value="1"/>
</dbReference>
<dbReference type="PANTHER" id="PTHR11880:SF8">
    <property type="entry name" value="SMALL RIBOSOMAL SUBUNIT PROTEIN US19M"/>
    <property type="match status" value="1"/>
</dbReference>
<dbReference type="Pfam" id="PF00203">
    <property type="entry name" value="Ribosomal_S19"/>
    <property type="match status" value="1"/>
</dbReference>
<dbReference type="PIRSF" id="PIRSF002144">
    <property type="entry name" value="Ribosomal_S19"/>
    <property type="match status" value="1"/>
</dbReference>
<dbReference type="PRINTS" id="PR00975">
    <property type="entry name" value="RIBOSOMALS19"/>
</dbReference>
<dbReference type="SUPFAM" id="SSF54570">
    <property type="entry name" value="Ribosomal protein S19"/>
    <property type="match status" value="1"/>
</dbReference>
<dbReference type="PROSITE" id="PS00323">
    <property type="entry name" value="RIBOSOMAL_S19"/>
    <property type="match status" value="1"/>
</dbReference>